<evidence type="ECO:0000255" key="1">
    <source>
        <dbReference type="HAMAP-Rule" id="MF_02001"/>
    </source>
</evidence>
<evidence type="ECO:0000255" key="2">
    <source>
        <dbReference type="PROSITE-ProRule" id="PRU00285"/>
    </source>
</evidence>
<organism>
    <name type="scientific">Escherichia coli O157:H7 (strain EC4115 / EHEC)</name>
    <dbReference type="NCBI Taxonomy" id="444450"/>
    <lineage>
        <taxon>Bacteria</taxon>
        <taxon>Pseudomonadati</taxon>
        <taxon>Pseudomonadota</taxon>
        <taxon>Gammaproteobacteria</taxon>
        <taxon>Enterobacterales</taxon>
        <taxon>Enterobacteriaceae</taxon>
        <taxon>Escherichia</taxon>
    </lineage>
</organism>
<protein>
    <recommendedName>
        <fullName evidence="1">Small heat shock protein IbpB</fullName>
    </recommendedName>
    <alternativeName>
        <fullName evidence="1">16 kDa heat shock protein B</fullName>
    </alternativeName>
</protein>
<reference key="1">
    <citation type="journal article" date="2011" name="Proc. Natl. Acad. Sci. U.S.A.">
        <title>Genomic anatomy of Escherichia coli O157:H7 outbreaks.</title>
        <authorList>
            <person name="Eppinger M."/>
            <person name="Mammel M.K."/>
            <person name="Leclerc J.E."/>
            <person name="Ravel J."/>
            <person name="Cebula T.A."/>
        </authorList>
    </citation>
    <scope>NUCLEOTIDE SEQUENCE [LARGE SCALE GENOMIC DNA]</scope>
    <source>
        <strain>EC4115 / EHEC</strain>
    </source>
</reference>
<name>IBPB_ECO5E</name>
<proteinExistence type="inferred from homology"/>
<dbReference type="EMBL" id="CP001164">
    <property type="protein sequence ID" value="ACI34651.1"/>
    <property type="molecule type" value="Genomic_DNA"/>
</dbReference>
<dbReference type="RefSeq" id="WP_001243431.1">
    <property type="nucleotide sequence ID" value="NC_011353.1"/>
</dbReference>
<dbReference type="SMR" id="B5YX92"/>
<dbReference type="GeneID" id="93778427"/>
<dbReference type="KEGG" id="ecf:ECH74115_5118"/>
<dbReference type="HOGENOM" id="CLU_046737_4_2_6"/>
<dbReference type="GO" id="GO:0005737">
    <property type="term" value="C:cytoplasm"/>
    <property type="evidence" value="ECO:0007669"/>
    <property type="project" value="UniProtKB-SubCell"/>
</dbReference>
<dbReference type="GO" id="GO:0050821">
    <property type="term" value="P:protein stabilization"/>
    <property type="evidence" value="ECO:0007669"/>
    <property type="project" value="UniProtKB-UniRule"/>
</dbReference>
<dbReference type="CDD" id="cd06470">
    <property type="entry name" value="ACD_IbpA-B_like"/>
    <property type="match status" value="1"/>
</dbReference>
<dbReference type="FunFam" id="2.60.40.790:FF:000005">
    <property type="entry name" value="Small heat shock protein IbpB"/>
    <property type="match status" value="1"/>
</dbReference>
<dbReference type="Gene3D" id="2.60.40.790">
    <property type="match status" value="1"/>
</dbReference>
<dbReference type="HAMAP" id="MF_02001">
    <property type="entry name" value="HSP20_IbpB"/>
    <property type="match status" value="1"/>
</dbReference>
<dbReference type="InterPro" id="IPR002068">
    <property type="entry name" value="A-crystallin/Hsp20_dom"/>
</dbReference>
<dbReference type="InterPro" id="IPR037913">
    <property type="entry name" value="ACD_IbpA/B"/>
</dbReference>
<dbReference type="InterPro" id="IPR008978">
    <property type="entry name" value="HSP20-like_chaperone"/>
</dbReference>
<dbReference type="InterPro" id="IPR022848">
    <property type="entry name" value="HSP20_IbpB"/>
</dbReference>
<dbReference type="NCBIfam" id="NF008618">
    <property type="entry name" value="PRK11597.1"/>
    <property type="match status" value="1"/>
</dbReference>
<dbReference type="PANTHER" id="PTHR47062">
    <property type="match status" value="1"/>
</dbReference>
<dbReference type="PANTHER" id="PTHR47062:SF2">
    <property type="entry name" value="SMALL HEAT SHOCK PROTEIN IBPB"/>
    <property type="match status" value="1"/>
</dbReference>
<dbReference type="Pfam" id="PF00011">
    <property type="entry name" value="HSP20"/>
    <property type="match status" value="1"/>
</dbReference>
<dbReference type="SUPFAM" id="SSF49764">
    <property type="entry name" value="HSP20-like chaperones"/>
    <property type="match status" value="1"/>
</dbReference>
<dbReference type="PROSITE" id="PS01031">
    <property type="entry name" value="SHSP"/>
    <property type="match status" value="1"/>
</dbReference>
<sequence length="142" mass="16093">MRNFDLSPLMRQWIGFDKLANALQNAGESQSFPPYNIEKSDDNHYRITLALAGFRQEDLEIQLEGTRLSVKGTPEQPKEEKKWLHQGLMNQPFSLSFTLAENMEVSGATFVNGLLHIDLIRNEPEPIAAQRIAISERPALNS</sequence>
<feature type="chain" id="PRO_1000189098" description="Small heat shock protein IbpB">
    <location>
        <begin position="1"/>
        <end position="142"/>
    </location>
</feature>
<feature type="domain" description="sHSP" evidence="2">
    <location>
        <begin position="26"/>
        <end position="137"/>
    </location>
</feature>
<gene>
    <name evidence="1" type="primary">ibpB</name>
    <name type="ordered locus">ECH74115_5118</name>
</gene>
<comment type="function">
    <text evidence="1">Associates with aggregated proteins, together with IbpA, to stabilize and protect them from irreversible denaturation and extensive proteolysis during heat shock and oxidative stress. Aggregated proteins bound to the IbpAB complex are more efficiently refolded and reactivated by the ATP-dependent chaperone systems ClpB and DnaK/DnaJ/GrpE. Its activity is ATP-independent.</text>
</comment>
<comment type="subunit">
    <text evidence="1">Homodimer. Forms homomultimers of about 100-150 subunits at optimal growth temperatures. Conformation changes to oligomers at high temperatures or high ionic concentrations. The decrease in size of the multimers is accompanied by an increase in chaperone activity.</text>
</comment>
<comment type="subcellular location">
    <subcellularLocation>
        <location evidence="1">Cytoplasm</location>
    </subcellularLocation>
</comment>
<comment type="domain">
    <text evidence="1">The N- and C-terminal flexible termini are involved in oligomerization and in the binding of non-native substrate proteins, and are essential for chaperone activity.</text>
</comment>
<comment type="similarity">
    <text evidence="1 2">Belongs to the small heat shock protein (HSP20) family.</text>
</comment>
<keyword id="KW-0143">Chaperone</keyword>
<keyword id="KW-0963">Cytoplasm</keyword>
<keyword id="KW-0346">Stress response</keyword>
<accession>B5YX92</accession>